<keyword id="KW-0378">Hydrolase</keyword>
<keyword id="KW-0546">Nucleotide metabolism</keyword>
<keyword id="KW-0547">Nucleotide-binding</keyword>
<keyword id="KW-1185">Reference proteome</keyword>
<proteinExistence type="inferred from homology"/>
<evidence type="ECO:0000255" key="1">
    <source>
        <dbReference type="HAMAP-Rule" id="MF_00146"/>
    </source>
</evidence>
<protein>
    <recommendedName>
        <fullName evidence="1">dCTP deaminase, dUMP-forming</fullName>
        <ecNumber evidence="1">3.5.4.30</ecNumber>
    </recommendedName>
    <alternativeName>
        <fullName evidence="1">Bifunctional dCTP deaminase:dUTPase</fullName>
    </alternativeName>
    <alternativeName>
        <fullName evidence="1">DCD-DUT</fullName>
    </alternativeName>
</protein>
<dbReference type="EC" id="3.5.4.30" evidence="1"/>
<dbReference type="EMBL" id="CR931997">
    <property type="protein sequence ID" value="CAI36326.1"/>
    <property type="molecule type" value="Genomic_DNA"/>
</dbReference>
<dbReference type="RefSeq" id="WP_005297152.1">
    <property type="nucleotide sequence ID" value="NC_007164.1"/>
</dbReference>
<dbReference type="SMR" id="Q4JXY1"/>
<dbReference type="STRING" id="306537.jk0174"/>
<dbReference type="GeneID" id="92737655"/>
<dbReference type="KEGG" id="cjk:jk0174"/>
<dbReference type="eggNOG" id="COG0717">
    <property type="taxonomic scope" value="Bacteria"/>
</dbReference>
<dbReference type="HOGENOM" id="CLU_087476_2_1_11"/>
<dbReference type="OrthoDB" id="9780956at2"/>
<dbReference type="UniPathway" id="UPA00610">
    <property type="reaction ID" value="UER00667"/>
</dbReference>
<dbReference type="Proteomes" id="UP000000545">
    <property type="component" value="Chromosome"/>
</dbReference>
<dbReference type="GO" id="GO:0033973">
    <property type="term" value="F:dCTP deaminase (dUMP-forming) activity"/>
    <property type="evidence" value="ECO:0007669"/>
    <property type="project" value="UniProtKB-UniRule"/>
</dbReference>
<dbReference type="GO" id="GO:0008829">
    <property type="term" value="F:dCTP deaminase activity"/>
    <property type="evidence" value="ECO:0007669"/>
    <property type="project" value="InterPro"/>
</dbReference>
<dbReference type="GO" id="GO:0000166">
    <property type="term" value="F:nucleotide binding"/>
    <property type="evidence" value="ECO:0007669"/>
    <property type="project" value="UniProtKB-KW"/>
</dbReference>
<dbReference type="GO" id="GO:0006226">
    <property type="term" value="P:dUMP biosynthetic process"/>
    <property type="evidence" value="ECO:0007669"/>
    <property type="project" value="UniProtKB-UniRule"/>
</dbReference>
<dbReference type="GO" id="GO:0006229">
    <property type="term" value="P:dUTP biosynthetic process"/>
    <property type="evidence" value="ECO:0007669"/>
    <property type="project" value="InterPro"/>
</dbReference>
<dbReference type="GO" id="GO:0015949">
    <property type="term" value="P:nucleobase-containing small molecule interconversion"/>
    <property type="evidence" value="ECO:0007669"/>
    <property type="project" value="TreeGrafter"/>
</dbReference>
<dbReference type="CDD" id="cd07557">
    <property type="entry name" value="trimeric_dUTPase"/>
    <property type="match status" value="1"/>
</dbReference>
<dbReference type="FunFam" id="2.70.40.10:FF:000005">
    <property type="entry name" value="dCTP deaminase, dUMP-forming"/>
    <property type="match status" value="1"/>
</dbReference>
<dbReference type="Gene3D" id="2.70.40.10">
    <property type="match status" value="1"/>
</dbReference>
<dbReference type="HAMAP" id="MF_00146">
    <property type="entry name" value="dCTP_deaminase"/>
    <property type="match status" value="1"/>
</dbReference>
<dbReference type="InterPro" id="IPR011962">
    <property type="entry name" value="dCTP_deaminase"/>
</dbReference>
<dbReference type="InterPro" id="IPR036157">
    <property type="entry name" value="dUTPase-like_sf"/>
</dbReference>
<dbReference type="InterPro" id="IPR033704">
    <property type="entry name" value="dUTPase_trimeric"/>
</dbReference>
<dbReference type="NCBIfam" id="TIGR02274">
    <property type="entry name" value="dCTP_deam"/>
    <property type="match status" value="1"/>
</dbReference>
<dbReference type="PANTHER" id="PTHR42680">
    <property type="entry name" value="DCTP DEAMINASE"/>
    <property type="match status" value="1"/>
</dbReference>
<dbReference type="PANTHER" id="PTHR42680:SF3">
    <property type="entry name" value="DCTP DEAMINASE"/>
    <property type="match status" value="1"/>
</dbReference>
<dbReference type="Pfam" id="PF22769">
    <property type="entry name" value="DCD"/>
    <property type="match status" value="1"/>
</dbReference>
<dbReference type="SUPFAM" id="SSF51283">
    <property type="entry name" value="dUTPase-like"/>
    <property type="match status" value="1"/>
</dbReference>
<comment type="function">
    <text evidence="1">Bifunctional enzyme that catalyzes both the deamination of dCTP to dUTP and the hydrolysis of dUTP to dUMP without releasing the toxic dUTP intermediate.</text>
</comment>
<comment type="catalytic activity">
    <reaction evidence="1">
        <text>dCTP + 2 H2O = dUMP + NH4(+) + diphosphate</text>
        <dbReference type="Rhea" id="RHEA:19205"/>
        <dbReference type="ChEBI" id="CHEBI:15377"/>
        <dbReference type="ChEBI" id="CHEBI:28938"/>
        <dbReference type="ChEBI" id="CHEBI:33019"/>
        <dbReference type="ChEBI" id="CHEBI:61481"/>
        <dbReference type="ChEBI" id="CHEBI:246422"/>
        <dbReference type="EC" id="3.5.4.30"/>
    </reaction>
</comment>
<comment type="pathway">
    <text evidence="1">Pyrimidine metabolism; dUMP biosynthesis; dUMP from dCTP: step 1/1.</text>
</comment>
<comment type="subunit">
    <text evidence="1">Homotrimer.</text>
</comment>
<comment type="similarity">
    <text evidence="1">Belongs to the dCTP deaminase family.</text>
</comment>
<organism>
    <name type="scientific">Corynebacterium jeikeium (strain K411)</name>
    <dbReference type="NCBI Taxonomy" id="306537"/>
    <lineage>
        <taxon>Bacteria</taxon>
        <taxon>Bacillati</taxon>
        <taxon>Actinomycetota</taxon>
        <taxon>Actinomycetes</taxon>
        <taxon>Mycobacteriales</taxon>
        <taxon>Corynebacteriaceae</taxon>
        <taxon>Corynebacterium</taxon>
    </lineage>
</organism>
<name>DCDB_CORJK</name>
<gene>
    <name evidence="1" type="primary">dcd</name>
    <name type="ordered locus">jk0174</name>
</gene>
<reference key="1">
    <citation type="journal article" date="2005" name="J. Bacteriol.">
        <title>Complete genome sequence and analysis of the multiresistant nosocomial pathogen Corynebacterium jeikeium K411, a lipid-requiring bacterium of the human skin flora.</title>
        <authorList>
            <person name="Tauch A."/>
            <person name="Kaiser O."/>
            <person name="Hain T."/>
            <person name="Goesmann A."/>
            <person name="Weisshaar B."/>
            <person name="Albersmeier A."/>
            <person name="Bekel T."/>
            <person name="Bischoff N."/>
            <person name="Brune I."/>
            <person name="Chakraborty T."/>
            <person name="Kalinowski J."/>
            <person name="Meyer F."/>
            <person name="Rupp O."/>
            <person name="Schneiker S."/>
            <person name="Viehoever P."/>
            <person name="Puehler A."/>
        </authorList>
    </citation>
    <scope>NUCLEOTIDE SEQUENCE [LARGE SCALE GENOMIC DNA]</scope>
    <source>
        <strain>K411</strain>
    </source>
</reference>
<feature type="chain" id="PRO_1000009713" description="dCTP deaminase, dUMP-forming">
    <location>
        <begin position="1"/>
        <end position="188"/>
    </location>
</feature>
<feature type="active site" description="Proton donor/acceptor" evidence="1">
    <location>
        <position position="129"/>
    </location>
</feature>
<feature type="binding site" evidence="1">
    <location>
        <begin position="101"/>
        <end position="106"/>
    </location>
    <ligand>
        <name>dCTP</name>
        <dbReference type="ChEBI" id="CHEBI:61481"/>
    </ligand>
</feature>
<feature type="binding site" evidence="1">
    <location>
        <position position="119"/>
    </location>
    <ligand>
        <name>dCTP</name>
        <dbReference type="ChEBI" id="CHEBI:61481"/>
    </ligand>
</feature>
<feature type="binding site" evidence="1">
    <location>
        <begin position="127"/>
        <end position="129"/>
    </location>
    <ligand>
        <name>dCTP</name>
        <dbReference type="ChEBI" id="CHEBI:61481"/>
    </ligand>
</feature>
<feature type="binding site" evidence="1">
    <location>
        <position position="148"/>
    </location>
    <ligand>
        <name>dCTP</name>
        <dbReference type="ChEBI" id="CHEBI:61481"/>
    </ligand>
</feature>
<feature type="binding site" evidence="1">
    <location>
        <position position="162"/>
    </location>
    <ligand>
        <name>dCTP</name>
        <dbReference type="ChEBI" id="CHEBI:61481"/>
    </ligand>
</feature>
<feature type="binding site" evidence="1">
    <location>
        <position position="174"/>
    </location>
    <ligand>
        <name>dCTP</name>
        <dbReference type="ChEBI" id="CHEBI:61481"/>
    </ligand>
</feature>
<feature type="site" description="Important for bifunctional activity" evidence="1">
    <location>
        <begin position="116"/>
        <end position="117"/>
    </location>
</feature>
<sequence length="188" mass="20350">MLLSDRDIRAAINSGELKIDPHDDQMVQPSSIDVRLDGLFRVFNNSKYTHIDPKQPQEELTTLVEVPDDEAFILHPGEFVLGATLECFGIPAHLAGRLEGKSSLGRLGLLTHSTAGFIDPGFTGHITLELSNTANLPIALYPGMKIGQLALFTMTSPAEAPYGSGTLGSKYQGQRGPTPSKAYLNFQN</sequence>
<accession>Q4JXY1</accession>